<keyword id="KW-0004">4Fe-4S</keyword>
<keyword id="KW-0408">Iron</keyword>
<keyword id="KW-0411">Iron-sulfur</keyword>
<keyword id="KW-0456">Lyase</keyword>
<keyword id="KW-0479">Metal-binding</keyword>
<keyword id="KW-0949">S-adenosyl-L-methionine</keyword>
<keyword id="KW-0784">Thiamine biosynthesis</keyword>
<keyword id="KW-0862">Zinc</keyword>
<name>THIC_ECO81</name>
<comment type="function">
    <text evidence="1">Catalyzes the synthesis of the hydroxymethylpyrimidine phosphate (HMP-P) moiety of thiamine from aminoimidazole ribotide (AIR) in a radical S-adenosyl-L-methionine (SAM)-dependent reaction.</text>
</comment>
<comment type="catalytic activity">
    <reaction evidence="1">
        <text>5-amino-1-(5-phospho-beta-D-ribosyl)imidazole + S-adenosyl-L-methionine = 4-amino-2-methyl-5-(phosphooxymethyl)pyrimidine + CO + 5'-deoxyadenosine + formate + L-methionine + 3 H(+)</text>
        <dbReference type="Rhea" id="RHEA:24840"/>
        <dbReference type="ChEBI" id="CHEBI:15378"/>
        <dbReference type="ChEBI" id="CHEBI:15740"/>
        <dbReference type="ChEBI" id="CHEBI:17245"/>
        <dbReference type="ChEBI" id="CHEBI:17319"/>
        <dbReference type="ChEBI" id="CHEBI:57844"/>
        <dbReference type="ChEBI" id="CHEBI:58354"/>
        <dbReference type="ChEBI" id="CHEBI:59789"/>
        <dbReference type="ChEBI" id="CHEBI:137981"/>
        <dbReference type="EC" id="4.1.99.17"/>
    </reaction>
</comment>
<comment type="cofactor">
    <cofactor evidence="1">
        <name>[4Fe-4S] cluster</name>
        <dbReference type="ChEBI" id="CHEBI:49883"/>
    </cofactor>
    <text evidence="1">Binds 1 [4Fe-4S] cluster per subunit. The cluster is coordinated with 3 cysteines and an exchangeable S-adenosyl-L-methionine.</text>
</comment>
<comment type="pathway">
    <text evidence="1">Cofactor biosynthesis; thiamine diphosphate biosynthesis.</text>
</comment>
<comment type="subunit">
    <text evidence="1">Homodimer.</text>
</comment>
<comment type="similarity">
    <text evidence="1">Belongs to the ThiC family.</text>
</comment>
<evidence type="ECO:0000255" key="1">
    <source>
        <dbReference type="HAMAP-Rule" id="MF_00089"/>
    </source>
</evidence>
<reference key="1">
    <citation type="journal article" date="2009" name="PLoS Genet.">
        <title>Organised genome dynamics in the Escherichia coli species results in highly diverse adaptive paths.</title>
        <authorList>
            <person name="Touchon M."/>
            <person name="Hoede C."/>
            <person name="Tenaillon O."/>
            <person name="Barbe V."/>
            <person name="Baeriswyl S."/>
            <person name="Bidet P."/>
            <person name="Bingen E."/>
            <person name="Bonacorsi S."/>
            <person name="Bouchier C."/>
            <person name="Bouvet O."/>
            <person name="Calteau A."/>
            <person name="Chiapello H."/>
            <person name="Clermont O."/>
            <person name="Cruveiller S."/>
            <person name="Danchin A."/>
            <person name="Diard M."/>
            <person name="Dossat C."/>
            <person name="Karoui M.E."/>
            <person name="Frapy E."/>
            <person name="Garry L."/>
            <person name="Ghigo J.M."/>
            <person name="Gilles A.M."/>
            <person name="Johnson J."/>
            <person name="Le Bouguenec C."/>
            <person name="Lescat M."/>
            <person name="Mangenot S."/>
            <person name="Martinez-Jehanne V."/>
            <person name="Matic I."/>
            <person name="Nassif X."/>
            <person name="Oztas S."/>
            <person name="Petit M.A."/>
            <person name="Pichon C."/>
            <person name="Rouy Z."/>
            <person name="Ruf C.S."/>
            <person name="Schneider D."/>
            <person name="Tourret J."/>
            <person name="Vacherie B."/>
            <person name="Vallenet D."/>
            <person name="Medigue C."/>
            <person name="Rocha E.P.C."/>
            <person name="Denamur E."/>
        </authorList>
    </citation>
    <scope>NUCLEOTIDE SEQUENCE [LARGE SCALE GENOMIC DNA]</scope>
    <source>
        <strain>ED1a</strain>
    </source>
</reference>
<protein>
    <recommendedName>
        <fullName evidence="1">Phosphomethylpyrimidine synthase</fullName>
        <ecNumber evidence="1">4.1.99.17</ecNumber>
    </recommendedName>
    <alternativeName>
        <fullName evidence="1">Hydroxymethylpyrimidine phosphate synthase</fullName>
        <shortName evidence="1">HMP-P synthase</shortName>
        <shortName evidence="1">HMP-phosphate synthase</shortName>
        <shortName evidence="1">HMPP synthase</shortName>
    </alternativeName>
    <alternativeName>
        <fullName evidence="1">Thiamine biosynthesis protein ThiC</fullName>
    </alternativeName>
</protein>
<gene>
    <name evidence="1" type="primary">thiC</name>
    <name type="ordered locus">ECED1_4701</name>
</gene>
<dbReference type="EC" id="4.1.99.17" evidence="1"/>
<dbReference type="EMBL" id="CU928162">
    <property type="protein sequence ID" value="CAR10808.2"/>
    <property type="molecule type" value="Genomic_DNA"/>
</dbReference>
<dbReference type="RefSeq" id="WP_012601824.1">
    <property type="nucleotide sequence ID" value="NC_011745.1"/>
</dbReference>
<dbReference type="SMR" id="B7MRC0"/>
<dbReference type="KEGG" id="ecq:ECED1_4701"/>
<dbReference type="HOGENOM" id="CLU_013181_2_1_6"/>
<dbReference type="UniPathway" id="UPA00060"/>
<dbReference type="Proteomes" id="UP000000748">
    <property type="component" value="Chromosome"/>
</dbReference>
<dbReference type="GO" id="GO:0005829">
    <property type="term" value="C:cytosol"/>
    <property type="evidence" value="ECO:0007669"/>
    <property type="project" value="TreeGrafter"/>
</dbReference>
<dbReference type="GO" id="GO:0051539">
    <property type="term" value="F:4 iron, 4 sulfur cluster binding"/>
    <property type="evidence" value="ECO:0007669"/>
    <property type="project" value="UniProtKB-KW"/>
</dbReference>
<dbReference type="GO" id="GO:0016830">
    <property type="term" value="F:carbon-carbon lyase activity"/>
    <property type="evidence" value="ECO:0007669"/>
    <property type="project" value="InterPro"/>
</dbReference>
<dbReference type="GO" id="GO:0008270">
    <property type="term" value="F:zinc ion binding"/>
    <property type="evidence" value="ECO:0007669"/>
    <property type="project" value="UniProtKB-UniRule"/>
</dbReference>
<dbReference type="GO" id="GO:0009228">
    <property type="term" value="P:thiamine biosynthetic process"/>
    <property type="evidence" value="ECO:0007669"/>
    <property type="project" value="UniProtKB-KW"/>
</dbReference>
<dbReference type="GO" id="GO:0009229">
    <property type="term" value="P:thiamine diphosphate biosynthetic process"/>
    <property type="evidence" value="ECO:0007669"/>
    <property type="project" value="UniProtKB-UniRule"/>
</dbReference>
<dbReference type="FunFam" id="3.20.20.540:FF:000001">
    <property type="entry name" value="Phosphomethylpyrimidine synthase"/>
    <property type="match status" value="1"/>
</dbReference>
<dbReference type="Gene3D" id="6.10.250.620">
    <property type="match status" value="1"/>
</dbReference>
<dbReference type="Gene3D" id="3.20.20.540">
    <property type="entry name" value="Radical SAM ThiC family, central domain"/>
    <property type="match status" value="1"/>
</dbReference>
<dbReference type="HAMAP" id="MF_00089">
    <property type="entry name" value="ThiC"/>
    <property type="match status" value="1"/>
</dbReference>
<dbReference type="InterPro" id="IPR037509">
    <property type="entry name" value="ThiC"/>
</dbReference>
<dbReference type="InterPro" id="IPR025747">
    <property type="entry name" value="ThiC-associated_dom"/>
</dbReference>
<dbReference type="InterPro" id="IPR038521">
    <property type="entry name" value="ThiC/Bza_core_dom"/>
</dbReference>
<dbReference type="InterPro" id="IPR002817">
    <property type="entry name" value="ThiC/BzaA/B"/>
</dbReference>
<dbReference type="NCBIfam" id="NF006763">
    <property type="entry name" value="PRK09284.1"/>
    <property type="match status" value="1"/>
</dbReference>
<dbReference type="NCBIfam" id="NF009895">
    <property type="entry name" value="PRK13352.1"/>
    <property type="match status" value="1"/>
</dbReference>
<dbReference type="NCBIfam" id="TIGR00190">
    <property type="entry name" value="thiC"/>
    <property type="match status" value="1"/>
</dbReference>
<dbReference type="PANTHER" id="PTHR30557:SF1">
    <property type="entry name" value="PHOSPHOMETHYLPYRIMIDINE SYNTHASE, CHLOROPLASTIC"/>
    <property type="match status" value="1"/>
</dbReference>
<dbReference type="PANTHER" id="PTHR30557">
    <property type="entry name" value="THIAMINE BIOSYNTHESIS PROTEIN THIC"/>
    <property type="match status" value="1"/>
</dbReference>
<dbReference type="Pfam" id="PF13667">
    <property type="entry name" value="ThiC-associated"/>
    <property type="match status" value="1"/>
</dbReference>
<dbReference type="Pfam" id="PF01964">
    <property type="entry name" value="ThiC_Rad_SAM"/>
    <property type="match status" value="1"/>
</dbReference>
<dbReference type="SFLD" id="SFLDF00407">
    <property type="entry name" value="phosphomethylpyrimidine_syntha"/>
    <property type="match status" value="1"/>
</dbReference>
<dbReference type="SFLD" id="SFLDG01114">
    <property type="entry name" value="phosphomethylpyrimidine_syntha"/>
    <property type="match status" value="1"/>
</dbReference>
<dbReference type="SFLD" id="SFLDS00113">
    <property type="entry name" value="Radical_SAM_Phosphomethylpyrim"/>
    <property type="match status" value="1"/>
</dbReference>
<accession>B7MRC0</accession>
<proteinExistence type="inferred from homology"/>
<organism>
    <name type="scientific">Escherichia coli O81 (strain ED1a)</name>
    <dbReference type="NCBI Taxonomy" id="585397"/>
    <lineage>
        <taxon>Bacteria</taxon>
        <taxon>Pseudomonadati</taxon>
        <taxon>Pseudomonadota</taxon>
        <taxon>Gammaproteobacteria</taxon>
        <taxon>Enterobacterales</taxon>
        <taxon>Enterobacteriaceae</taxon>
        <taxon>Escherichia</taxon>
    </lineage>
</organism>
<sequence length="631" mass="70764">MSATKLTRREQRAQAQHFIDTLEGSAFPNSKRIYITGTHPGVRVPMREIQLSPTLIGGSKEQPQYEENEAIPVYDTSGPYGDPQIAINVQQGLAKLRQPWIDARGDTEELTVRSSDYTKARLADDGLDELRFSGVLTPKRAKAGHRVTQLHYARKGIITPEMEFIAIRENMGRERIRSEVLRHQHPGMSFGARLPENITAEFVRDEVAAGRAIIPANINHPESEPMIIGRNFLVKVNANIGNSAVTSSIEEEVEKLVWSTRWGADTVMDLSTGRYIHETREWILRNSPVPIGTVPIYQALEKVNGIAEDLTWEVFRDTLLEQAEQGVDYFTIHAGVLLRYVPMTAKRLTGIVSRGGSIMAKWCLSHHQENFLYQHFREICEICAAYDVSLSLGDGLRPGSIQDANDEAQFAELHTLGELTKIAWEYDVQVMIEGPGHVPMQMIRRNMTEELEHCHEAPFYTLGPLTTDIAPGYDHFTSGIGAAMIGWFGCAMLCYVTPKEHLGLPNKEDVKQGLITYKIAAHAADLAKGHPGAQIRDNAMSKARFEFRWEDQFNLALDPFTARAYHDETLSQESGKVAHFCSMCGPKFCSMKISQEVRDYAAAQTIEVGMADMSENFRARGGEIYLRKEEA</sequence>
<feature type="chain" id="PRO_1000118511" description="Phosphomethylpyrimidine synthase">
    <location>
        <begin position="1"/>
        <end position="631"/>
    </location>
</feature>
<feature type="binding site" evidence="1">
    <location>
        <position position="239"/>
    </location>
    <ligand>
        <name>substrate</name>
    </ligand>
</feature>
<feature type="binding site" evidence="1">
    <location>
        <position position="268"/>
    </location>
    <ligand>
        <name>substrate</name>
    </ligand>
</feature>
<feature type="binding site" evidence="1">
    <location>
        <position position="297"/>
    </location>
    <ligand>
        <name>substrate</name>
    </ligand>
</feature>
<feature type="binding site" evidence="1">
    <location>
        <position position="333"/>
    </location>
    <ligand>
        <name>substrate</name>
    </ligand>
</feature>
<feature type="binding site" evidence="1">
    <location>
        <begin position="353"/>
        <end position="355"/>
    </location>
    <ligand>
        <name>substrate</name>
    </ligand>
</feature>
<feature type="binding site" evidence="1">
    <location>
        <begin position="394"/>
        <end position="397"/>
    </location>
    <ligand>
        <name>substrate</name>
    </ligand>
</feature>
<feature type="binding site" evidence="1">
    <location>
        <position position="433"/>
    </location>
    <ligand>
        <name>substrate</name>
    </ligand>
</feature>
<feature type="binding site" evidence="1">
    <location>
        <position position="437"/>
    </location>
    <ligand>
        <name>Zn(2+)</name>
        <dbReference type="ChEBI" id="CHEBI:29105"/>
    </ligand>
</feature>
<feature type="binding site" evidence="1">
    <location>
        <position position="460"/>
    </location>
    <ligand>
        <name>substrate</name>
    </ligand>
</feature>
<feature type="binding site" evidence="1">
    <location>
        <position position="501"/>
    </location>
    <ligand>
        <name>Zn(2+)</name>
        <dbReference type="ChEBI" id="CHEBI:29105"/>
    </ligand>
</feature>
<feature type="binding site" evidence="1">
    <location>
        <position position="581"/>
    </location>
    <ligand>
        <name>[4Fe-4S] cluster</name>
        <dbReference type="ChEBI" id="CHEBI:49883"/>
        <note>4Fe-4S-S-AdoMet</note>
    </ligand>
</feature>
<feature type="binding site" evidence="1">
    <location>
        <position position="584"/>
    </location>
    <ligand>
        <name>[4Fe-4S] cluster</name>
        <dbReference type="ChEBI" id="CHEBI:49883"/>
        <note>4Fe-4S-S-AdoMet</note>
    </ligand>
</feature>
<feature type="binding site" evidence="1">
    <location>
        <position position="589"/>
    </location>
    <ligand>
        <name>[4Fe-4S] cluster</name>
        <dbReference type="ChEBI" id="CHEBI:49883"/>
        <note>4Fe-4S-S-AdoMet</note>
    </ligand>
</feature>